<dbReference type="EMBL" id="AY572781">
    <property type="protein sequence ID" value="AAS78923.1"/>
    <property type="molecule type" value="mRNA"/>
</dbReference>
<dbReference type="EMBL" id="AP000381">
    <property type="protein sequence ID" value="BAB02126.1"/>
    <property type="molecule type" value="Genomic_DNA"/>
</dbReference>
<dbReference type="EMBL" id="CP002686">
    <property type="protein sequence ID" value="AEE77293.1"/>
    <property type="molecule type" value="Genomic_DNA"/>
</dbReference>
<dbReference type="EMBL" id="AK175284">
    <property type="protein sequence ID" value="BAD43047.1"/>
    <property type="molecule type" value="mRNA"/>
</dbReference>
<dbReference type="EMBL" id="BT024476">
    <property type="protein sequence ID" value="ABD19657.1"/>
    <property type="molecule type" value="mRNA"/>
</dbReference>
<dbReference type="EMBL" id="AY085053">
    <property type="protein sequence ID" value="AAM61610.1"/>
    <property type="molecule type" value="mRNA"/>
</dbReference>
<dbReference type="RefSeq" id="NP_566815.1">
    <molecule id="Q9LK22-1"/>
    <property type="nucleotide sequence ID" value="NM_113645.3"/>
</dbReference>
<dbReference type="PDB" id="6HD0">
    <property type="method" value="X-ray"/>
    <property type="resolution" value="3.73 A"/>
    <property type="chains" value="D/E/F/G/I/K=1-251"/>
</dbReference>
<dbReference type="PDBsum" id="6HD0"/>
<dbReference type="SMR" id="Q9LK22"/>
<dbReference type="FunCoup" id="Q9LK22">
    <property type="interactions" value="1359"/>
</dbReference>
<dbReference type="STRING" id="3702.Q9LK22"/>
<dbReference type="TCDB" id="3.A.16.1.5">
    <property type="family name" value="the endoplasmic reticular retrotranslocon (er-rt) family"/>
</dbReference>
<dbReference type="iPTMnet" id="Q9LK22"/>
<dbReference type="MetOSite" id="Q9LK22"/>
<dbReference type="PaxDb" id="3702-AT3G27310.1"/>
<dbReference type="ProteomicsDB" id="224818">
    <molecule id="Q9LK22-1"/>
</dbReference>
<dbReference type="EnsemblPlants" id="AT3G27310.1">
    <molecule id="Q9LK22-1"/>
    <property type="protein sequence ID" value="AT3G27310.1"/>
    <property type="gene ID" value="AT3G27310"/>
</dbReference>
<dbReference type="GeneID" id="822350"/>
<dbReference type="Gramene" id="AT3G27310.1">
    <molecule id="Q9LK22-1"/>
    <property type="protein sequence ID" value="AT3G27310.1"/>
    <property type="gene ID" value="AT3G27310"/>
</dbReference>
<dbReference type="KEGG" id="ath:AT3G27310"/>
<dbReference type="Araport" id="AT3G27310"/>
<dbReference type="TAIR" id="AT3G27310">
    <property type="gene designation" value="PUX1"/>
</dbReference>
<dbReference type="eggNOG" id="KOG2699">
    <property type="taxonomic scope" value="Eukaryota"/>
</dbReference>
<dbReference type="HOGENOM" id="CLU_062119_0_0_1"/>
<dbReference type="InParanoid" id="Q9LK22"/>
<dbReference type="OMA" id="AQPDIPF"/>
<dbReference type="PhylomeDB" id="Q9LK22"/>
<dbReference type="PRO" id="PR:Q9LK22"/>
<dbReference type="Proteomes" id="UP000006548">
    <property type="component" value="Chromosome 3"/>
</dbReference>
<dbReference type="ExpressionAtlas" id="Q9LK22">
    <property type="expression patterns" value="baseline and differential"/>
</dbReference>
<dbReference type="GO" id="GO:0005737">
    <property type="term" value="C:cytoplasm"/>
    <property type="evidence" value="ECO:0007669"/>
    <property type="project" value="UniProtKB-SubCell"/>
</dbReference>
<dbReference type="GO" id="GO:0051117">
    <property type="term" value="F:ATPase binding"/>
    <property type="evidence" value="ECO:0000353"/>
    <property type="project" value="UniProtKB"/>
</dbReference>
<dbReference type="GO" id="GO:0035265">
    <property type="term" value="P:organ growth"/>
    <property type="evidence" value="ECO:0000315"/>
    <property type="project" value="TAIR"/>
</dbReference>
<dbReference type="GO" id="GO:0032984">
    <property type="term" value="P:protein-containing complex disassembly"/>
    <property type="evidence" value="ECO:0000314"/>
    <property type="project" value="UniProtKB"/>
</dbReference>
<dbReference type="CDD" id="cd16118">
    <property type="entry name" value="UBX2_UBXN9"/>
    <property type="match status" value="1"/>
</dbReference>
<dbReference type="Gene3D" id="3.10.20.90">
    <property type="entry name" value="Phosphatidylinositol 3-kinase Catalytic Subunit, Chain A, domain 1"/>
    <property type="match status" value="1"/>
</dbReference>
<dbReference type="InterPro" id="IPR044232">
    <property type="entry name" value="PUX1"/>
</dbReference>
<dbReference type="InterPro" id="IPR029071">
    <property type="entry name" value="Ubiquitin-like_domsf"/>
</dbReference>
<dbReference type="InterPro" id="IPR001012">
    <property type="entry name" value="UBX_dom"/>
</dbReference>
<dbReference type="PANTHER" id="PTHR47557">
    <property type="entry name" value="PLANT UBX DOMAIN-CONTAINING PROTEIN 1"/>
    <property type="match status" value="1"/>
</dbReference>
<dbReference type="PANTHER" id="PTHR47557:SF2">
    <property type="entry name" value="PLANT UBX DOMAIN-CONTAINING PROTEIN 1"/>
    <property type="match status" value="1"/>
</dbReference>
<dbReference type="Pfam" id="PF00789">
    <property type="entry name" value="UBX"/>
    <property type="match status" value="1"/>
</dbReference>
<dbReference type="SUPFAM" id="SSF54236">
    <property type="entry name" value="Ubiquitin-like"/>
    <property type="match status" value="1"/>
</dbReference>
<dbReference type="PROSITE" id="PS50033">
    <property type="entry name" value="UBX"/>
    <property type="match status" value="1"/>
</dbReference>
<feature type="chain" id="PRO_0000432600" description="Plant UBX domain-containing protein 1">
    <location>
        <begin position="1"/>
        <end position="251"/>
    </location>
</feature>
<feature type="domain" description="UBX" evidence="1">
    <location>
        <begin position="104"/>
        <end position="180"/>
    </location>
</feature>
<feature type="region of interest" description="Disordered" evidence="2">
    <location>
        <begin position="212"/>
        <end position="251"/>
    </location>
</feature>
<feature type="compositionally biased region" description="Polar residues" evidence="2">
    <location>
        <begin position="217"/>
        <end position="227"/>
    </location>
</feature>
<feature type="compositionally biased region" description="Basic and acidic residues" evidence="2">
    <location>
        <begin position="232"/>
        <end position="243"/>
    </location>
</feature>
<feature type="splice variant" id="VSP_059337" description="In isoform 2." evidence="7">
    <location>
        <begin position="1"/>
        <end position="21"/>
    </location>
</feature>
<feature type="modified residue" description="N-acetylmethionine" evidence="11">
    <location sequence="Q9LK22-2">
        <position position="1"/>
    </location>
</feature>
<reference key="1">
    <citation type="journal article" date="2004" name="J. Biol. Chem.">
        <title>Plant UBX domain-containing protein 1, PUX1, regulates the oligomeric structure and activity of arabidopsis CDC48.</title>
        <authorList>
            <person name="Rancour D.M."/>
            <person name="Park S."/>
            <person name="Knight S.D."/>
            <person name="Bednarek S.Y."/>
        </authorList>
    </citation>
    <scope>NUCLEOTIDE SEQUENCE [MRNA]</scope>
    <scope>INTERACTION WITH CDC48A</scope>
    <scope>DISRUPTION PHENOTYPE</scope>
    <scope>FUNCTION</scope>
    <scope>SUBCELLULAR LOCATION</scope>
    <source>
        <strain>cv. Columbia</strain>
    </source>
</reference>
<reference key="2">
    <citation type="journal article" date="2000" name="DNA Res.">
        <title>Structural analysis of Arabidopsis thaliana chromosome 3. II. Sequence features of the 4,251,695 bp regions covered by 90 P1, TAC and BAC clones.</title>
        <authorList>
            <person name="Kaneko T."/>
            <person name="Katoh T."/>
            <person name="Sato S."/>
            <person name="Nakamura Y."/>
            <person name="Asamizu E."/>
            <person name="Tabata S."/>
        </authorList>
    </citation>
    <scope>NUCLEOTIDE SEQUENCE [LARGE SCALE GENOMIC DNA]</scope>
    <source>
        <strain>cv. Columbia</strain>
    </source>
</reference>
<reference key="3">
    <citation type="journal article" date="2017" name="Plant J.">
        <title>Araport11: a complete reannotation of the Arabidopsis thaliana reference genome.</title>
        <authorList>
            <person name="Cheng C.Y."/>
            <person name="Krishnakumar V."/>
            <person name="Chan A.P."/>
            <person name="Thibaud-Nissen F."/>
            <person name="Schobel S."/>
            <person name="Town C.D."/>
        </authorList>
    </citation>
    <scope>GENOME REANNOTATION</scope>
    <source>
        <strain>cv. Columbia</strain>
    </source>
</reference>
<reference key="4">
    <citation type="submission" date="2004-09" db="EMBL/GenBank/DDBJ databases">
        <title>Large-scale analysis of RIKEN Arabidopsis full-length (RAFL) cDNAs.</title>
        <authorList>
            <person name="Totoki Y."/>
            <person name="Seki M."/>
            <person name="Ishida J."/>
            <person name="Nakajima M."/>
            <person name="Enju A."/>
            <person name="Kamiya A."/>
            <person name="Narusaka M."/>
            <person name="Shin-i T."/>
            <person name="Nakagawa M."/>
            <person name="Sakamoto N."/>
            <person name="Oishi K."/>
            <person name="Kohara Y."/>
            <person name="Kobayashi M."/>
            <person name="Toyoda A."/>
            <person name="Sakaki Y."/>
            <person name="Sakurai T."/>
            <person name="Iida K."/>
            <person name="Akiyama K."/>
            <person name="Satou M."/>
            <person name="Toyoda T."/>
            <person name="Konagaya A."/>
            <person name="Carninci P."/>
            <person name="Kawai J."/>
            <person name="Hayashizaki Y."/>
            <person name="Shinozaki K."/>
        </authorList>
    </citation>
    <scope>NUCLEOTIDE SEQUENCE [LARGE SCALE MRNA]</scope>
    <source>
        <strain>cv. Columbia</strain>
    </source>
</reference>
<reference key="5">
    <citation type="submission" date="2006-02" db="EMBL/GenBank/DDBJ databases">
        <title>Arabidopsis ORF clones.</title>
        <authorList>
            <person name="Shinn P."/>
            <person name="Chen H."/>
            <person name="Kim C.J."/>
            <person name="Ecker J.R."/>
        </authorList>
    </citation>
    <scope>NUCLEOTIDE SEQUENCE [LARGE SCALE MRNA]</scope>
    <source>
        <strain>cv. Columbia</strain>
    </source>
</reference>
<reference key="6">
    <citation type="submission" date="2002-03" db="EMBL/GenBank/DDBJ databases">
        <title>Full-length cDNA from Arabidopsis thaliana.</title>
        <authorList>
            <person name="Brover V.V."/>
            <person name="Troukhan M.E."/>
            <person name="Alexandrov N.A."/>
            <person name="Lu Y.-P."/>
            <person name="Flavell R.B."/>
            <person name="Feldmann K.A."/>
        </authorList>
    </citation>
    <scope>NUCLEOTIDE SEQUENCE [LARGE SCALE MRNA]</scope>
    <source>
        <strain>cv. Columbia</strain>
    </source>
</reference>
<reference key="7">
    <citation type="book" date="2005" name="Proceedings of the 16th international conference on Arabidopsis research">
        <title>The plant UBX-domain containing (PUX) protein family regulates the function of Arabidopsis CDC48, a conserved essential AAA-ATPase.</title>
        <authorList>
            <person name="Posthuma R."/>
            <person name="Rancour D."/>
            <person name="Park S."/>
            <person name="Bates B."/>
            <person name="Bednarek S."/>
        </authorList>
    </citation>
    <scope>GENE FAMILY</scope>
    <scope>INTERACTION WITH CDC48A</scope>
    <scope>FUNCTION</scope>
</reference>
<reference key="8">
    <citation type="journal article" date="2007" name="J. Biol. Chem.">
        <title>Protein domain-domain interactions and requirements for the negative regulation of Arabidopsis CDC48/p97 by the plant ubiquitin regulatory X (UBX) domain-containing protein, PUX1.</title>
        <authorList>
            <person name="Park S."/>
            <person name="Rancour D.M."/>
            <person name="Bednarek S.Y."/>
        </authorList>
    </citation>
    <scope>INTERACTION WITH CDC48A</scope>
    <scope>FUNCTION</scope>
</reference>
<reference key="9">
    <citation type="journal article" date="2012" name="Mol. Cell. Proteomics">
        <title>Comparative large-scale characterisation of plant vs. mammal proteins reveals similar and idiosyncratic N-alpha acetylation features.</title>
        <authorList>
            <person name="Bienvenut W.V."/>
            <person name="Sumpton D."/>
            <person name="Martinez A."/>
            <person name="Lilla S."/>
            <person name="Espagne C."/>
            <person name="Meinnel T."/>
            <person name="Giglione C."/>
        </authorList>
    </citation>
    <scope>ACETYLATION [LARGE SCALE ANALYSIS] AT MET-1 (ISOFORM 2)</scope>
    <scope>IDENTIFICATION BY MASS SPECTROMETRY [LARGE SCALE ANALYSIS]</scope>
</reference>
<name>PUX1_ARATH</name>
<keyword id="KW-0002">3D-structure</keyword>
<keyword id="KW-0007">Acetylation</keyword>
<keyword id="KW-0024">Alternative initiation</keyword>
<keyword id="KW-0963">Cytoplasm</keyword>
<keyword id="KW-1185">Reference proteome</keyword>
<keyword id="KW-0833">Ubl conjugation pathway</keyword>
<comment type="function">
    <text evidence="3 4 5">Regulates CDC48A by inhibiting its ATPase activity and by promoting the disassembly of the active hexamer.</text>
</comment>
<comment type="subunit">
    <text evidence="3 4 5">Interacts with CDC48A (non-hexameric) via its UBX-containing C-terminal domain.</text>
</comment>
<comment type="subcellular location">
    <subcellularLocation>
        <location evidence="3">Cytoplasm</location>
    </subcellularLocation>
</comment>
<comment type="alternative products">
    <event type="alternative initiation"/>
    <isoform>
        <id>Q9LK22-1</id>
        <name>1</name>
        <sequence type="displayed"/>
    </isoform>
    <isoform>
        <id>Q9LK22-2</id>
        <name>2</name>
        <sequence type="described" ref="VSP_059337"/>
    </isoform>
</comment>
<comment type="disruption phenotype">
    <text evidence="3">Accelerated growth of various plant organs including roots and inflorescence shoots.</text>
</comment>
<comment type="miscellaneous">
    <molecule>Isoform 2</molecule>
    <text evidence="7">Produced by alternative initiation at Met-22 of isoform 1.</text>
</comment>
<accession>Q9LK22</accession>
<proteinExistence type="evidence at protein level"/>
<protein>
    <recommendedName>
        <fullName evidence="6">Plant UBX domain-containing protein 1</fullName>
        <shortName evidence="6">PUX1</shortName>
    </recommendedName>
    <alternativeName>
        <fullName evidence="9">CDC48-interacting UBX-domain protein 1</fullName>
    </alternativeName>
</protein>
<evidence type="ECO:0000255" key="1">
    <source>
        <dbReference type="PROSITE-ProRule" id="PRU00215"/>
    </source>
</evidence>
<evidence type="ECO:0000256" key="2">
    <source>
        <dbReference type="SAM" id="MobiDB-lite"/>
    </source>
</evidence>
<evidence type="ECO:0000269" key="3">
    <source>
    </source>
</evidence>
<evidence type="ECO:0000269" key="4">
    <source>
    </source>
</evidence>
<evidence type="ECO:0000269" key="5">
    <source ref="7"/>
</evidence>
<evidence type="ECO:0000303" key="6">
    <source ref="7"/>
</evidence>
<evidence type="ECO:0000305" key="7"/>
<evidence type="ECO:0000312" key="8">
    <source>
        <dbReference type="Araport" id="AT3G27310"/>
    </source>
</evidence>
<evidence type="ECO:0000312" key="9">
    <source>
        <dbReference type="EMBL" id="AAS78923.1"/>
    </source>
</evidence>
<evidence type="ECO:0000312" key="10">
    <source>
        <dbReference type="EMBL" id="BAB02126.1"/>
    </source>
</evidence>
<evidence type="ECO:0007744" key="11">
    <source>
    </source>
</evidence>
<organism>
    <name type="scientific">Arabidopsis thaliana</name>
    <name type="common">Mouse-ear cress</name>
    <dbReference type="NCBI Taxonomy" id="3702"/>
    <lineage>
        <taxon>Eukaryota</taxon>
        <taxon>Viridiplantae</taxon>
        <taxon>Streptophyta</taxon>
        <taxon>Embryophyta</taxon>
        <taxon>Tracheophyta</taxon>
        <taxon>Spermatophyta</taxon>
        <taxon>Magnoliopsida</taxon>
        <taxon>eudicotyledons</taxon>
        <taxon>Gunneridae</taxon>
        <taxon>Pentapetalae</taxon>
        <taxon>rosids</taxon>
        <taxon>malvids</taxon>
        <taxon>Brassicales</taxon>
        <taxon>Brassicaceae</taxon>
        <taxon>Camelineae</taxon>
        <taxon>Arabidopsis</taxon>
    </lineage>
</organism>
<gene>
    <name evidence="9" type="primary">PUX1</name>
    <name evidence="8" type="ordered locus">At3g27310</name>
    <name evidence="10" type="ORF">K17E12.13</name>
</gene>
<sequence length="251" mass="28502">MFVDDPSLHTLKRRRLEITDSMEASSSAQAKIADMREKLGREVRVFETSSISQRPSQVSSADDESDDFYEFTPADFYRLLATKKEDKSLKTRKIREAEEAARRSKLTKAVIRVRFPDNHTLEATFHPSEKIQGLIDLVKRVVAHPDVPFYLYTTPPKKQIKDFSQDFYSAGFVPGAIVYFSNDQPKDDGGSSTPYLNEEILSLKDLEAMTKAVEPVESSSEPATVDSSAVPVEHERKSTEKKTTKPKWFKM</sequence>